<accession>H2A0M0</accession>
<comment type="subcellular location">
    <subcellularLocation>
        <location evidence="3">Secreted</location>
    </subcellularLocation>
</comment>
<comment type="tissue specificity">
    <text evidence="3">Prismatic layer of shell (at protein level). Expressed primarily in the mantle with highest level in the mantle edge and lower level in the mantle pallium.</text>
</comment>
<dbReference type="EMBL" id="HE610387">
    <property type="protein sequence ID" value="CCE46161.1"/>
    <property type="molecule type" value="mRNA"/>
</dbReference>
<dbReference type="SMR" id="H2A0M0"/>
<dbReference type="GO" id="GO:0005576">
    <property type="term" value="C:extracellular region"/>
    <property type="evidence" value="ECO:0007669"/>
    <property type="project" value="UniProtKB-SubCell"/>
</dbReference>
<dbReference type="InterPro" id="IPR013320">
    <property type="entry name" value="ConA-like_dom_sf"/>
</dbReference>
<dbReference type="SUPFAM" id="SSF49899">
    <property type="entry name" value="Concanavalin A-like lectins/glucanases"/>
    <property type="match status" value="1"/>
</dbReference>
<evidence type="ECO:0000255" key="1"/>
<evidence type="ECO:0000256" key="2">
    <source>
        <dbReference type="SAM" id="MobiDB-lite"/>
    </source>
</evidence>
<evidence type="ECO:0000269" key="3">
    <source>
    </source>
</evidence>
<evidence type="ECO:0000305" key="4"/>
<protein>
    <recommendedName>
        <fullName>Asparagine-rich protein</fullName>
    </recommendedName>
    <alternativeName>
        <fullName>Prism uncharacterized shell protein 1</fullName>
        <shortName>PUSP1</shortName>
    </alternativeName>
</protein>
<keyword id="KW-0903">Direct protein sequencing</keyword>
<keyword id="KW-0964">Secreted</keyword>
<keyword id="KW-0732">Signal</keyword>
<sequence>MKGTSALLLIGFFHATISQDPGGTVVIGSLSGRKRGNLNTGGQITSNSAILGDVNAGSKLSEPPKRRNTDKTARMLENNPRIGGSLIPPPGVIMEPNPYDINPPYFVSNKNSQSTNSATNTMLQSLTSDTKTTTRTSQTSSTRASSSITQGINTMNRNSMRFNQVDRNKISGFVNSGGQIQTNPLNTNSQSSPILAAQRQITRQKSENTQGNSIVRNGGTNSLNIPSSTRRSQPPNMAVQIGQNTATFNMGTDGKVLHKFLPTNLFENINSVSKEPRNTASVPGIGGMRNPGPSISIRNIFGTNNIEGSSVQLTGSSGVFVSDPGPKGNPTDVPQFVPSGISPTVRDPNALDPFKSIRNQIVPDIKRNEVNRGNSMISAPVIDNPTNSNSMVELNSILQNVQNGFLSEALGNSNNQNNRVTNIVNQINSADPQPVRRCQFLPYRDLRTNKIDRRYFRQLVNGKWLNLKCADGAGFNETTCLCSIHLTGDAQCSPEVRLNFNDGTIQNLTPINVHIDAEGVDASKGWAHFNGSTQMKFEYFNAYDVQRDFLIKLRFKADSYIPNQSHPIVTNCVAGQENTDPSIGVFLTGNYPHKIVFILQTDKSKLLQHLIFDVPRDGWHDITYKYDGSTLTGILDGKEKSLPTEGRIENRQAVLVFGGCGNRIFRGNIDDIQIYTCIPPSHRNKG</sequence>
<proteinExistence type="evidence at protein level"/>
<organism>
    <name type="scientific">Margaritifera margaritifera</name>
    <name type="common">Freshwater pearl mussel</name>
    <dbReference type="NCBI Taxonomy" id="102329"/>
    <lineage>
        <taxon>Eukaryota</taxon>
        <taxon>Metazoa</taxon>
        <taxon>Spiralia</taxon>
        <taxon>Lophotrochozoa</taxon>
        <taxon>Mollusca</taxon>
        <taxon>Bivalvia</taxon>
        <taxon>Autobranchia</taxon>
        <taxon>Pteriomorphia</taxon>
        <taxon>Pterioida</taxon>
        <taxon>Pterioidea</taxon>
        <taxon>Pteriidae</taxon>
        <taxon>Pinctada</taxon>
    </lineage>
</organism>
<reference evidence="4" key="1">
    <citation type="journal article" date="2010" name="BMC Genomics">
        <title>Transcriptome and proteome analysis of Pinctada margaritifera calcifying mantle and shell: focus on biomineralization.</title>
        <authorList>
            <person name="Joubert C."/>
            <person name="Piquemal D."/>
            <person name="Marie B."/>
            <person name="Manchon L."/>
            <person name="Pierrat F."/>
            <person name="Zanella-Cleon I."/>
            <person name="Cochennec-Laureau N."/>
            <person name="Gueguen Y."/>
            <person name="Montagnani C."/>
        </authorList>
    </citation>
    <scope>NUCLEOTIDE SEQUENCE [MRNA]</scope>
    <scope>IDENTIFICATION</scope>
    <source>
        <tissue>Mantle</tissue>
    </source>
</reference>
<reference key="2">
    <citation type="journal article" date="2012" name="Proc. Natl. Acad. Sci. U.S.A.">
        <title>Different secretory repertoires control the biomineralization processes of prism and nacre deposition of the pearl oyster shell.</title>
        <authorList>
            <person name="Marie B."/>
            <person name="Joubert C."/>
            <person name="Tayale A."/>
            <person name="Zanella-Cleon I."/>
            <person name="Belliard C."/>
            <person name="Piquemal D."/>
            <person name="Cochennec-Laureau N."/>
            <person name="Marin F."/>
            <person name="Gueguen Y."/>
            <person name="Montagnani C."/>
        </authorList>
    </citation>
    <scope>PROTEIN SEQUENCE OF 260-277; 595-616 AND 641-663</scope>
    <scope>SUBCELLULAR LOCATION</scope>
    <scope>TISSUE SPECIFICITY</scope>
    <source>
        <tissue>Shell</tissue>
    </source>
</reference>
<name>NRP_PINMG</name>
<feature type="signal peptide" evidence="1">
    <location>
        <begin position="1"/>
        <end position="18"/>
    </location>
</feature>
<feature type="chain" id="PRO_0000417943" description="Asparagine-rich protein" evidence="1">
    <location>
        <begin position="19"/>
        <end position="686"/>
    </location>
</feature>
<feature type="region of interest" description="Disordered" evidence="2">
    <location>
        <begin position="34"/>
        <end position="73"/>
    </location>
</feature>
<feature type="region of interest" description="Disordered" evidence="2">
    <location>
        <begin position="125"/>
        <end position="148"/>
    </location>
</feature>
<feature type="region of interest" description="Disordered" evidence="2">
    <location>
        <begin position="201"/>
        <end position="236"/>
    </location>
</feature>
<feature type="compositionally biased region" description="Polar residues" evidence="2">
    <location>
        <begin position="37"/>
        <end position="49"/>
    </location>
</feature>
<feature type="compositionally biased region" description="Basic and acidic residues" evidence="2">
    <location>
        <begin position="62"/>
        <end position="73"/>
    </location>
</feature>